<sequence>MATFKDACYHYKKLNKLNSLVLKLGANDEWRPAPVTKYKGWCLDCCQYTNLTYCRGCALYHVCQWCSQYNRCFLDEEPHLLRMRTFKDVVTKEDIEGLLTMYETLFPINEKLVNKFINSVKQRKCRNEYLLEWYNHLLMPITLQALTINLEDNVYYIFGYYDCMEHENQTPFQFINLLEKYDKLLLDDRNFHRMSHLPVILQQEYALRYFSKSRFLSKGKKRLSRSDFSDSLMEDRHSPTSLMQVVRNCISIHINDCEWNKACTLIVDARNYISIMNSSYTEHYSVSQRCKLFTKYKFGIVSRLVKPNYIFSSHESCALNVHNCKWCQINNHYKVWEDFRLRKIYNNVMDFIRALVKSNGNVGHCSSQESVYKYIPDLFLICKTEKWNEAVEMLFNYLEPVDINGTEYVLLDYEVNWEVRGLVMQNMDGKVPRILNMNDTKKILSAMIFDWFDTRYMRETPMTTSTTNQLRTLNKRNELIDEYDLELSDVE</sequence>
<reference key="1">
    <citation type="journal article" date="2008" name="J. Virol.">
        <title>Full genome-based classification of rotaviruses reveals a common origin between human Wa-Like and porcine rotavirus strains and human DS-1-like and bovine rotavirus strains.</title>
        <authorList>
            <person name="Matthijnssens J."/>
            <person name="Ciarlet M."/>
            <person name="Heiman E.M."/>
            <person name="Arijs I."/>
            <person name="Delbeke T."/>
            <person name="McDonald S.M."/>
            <person name="Palombo E.A."/>
            <person name="Iturriza-Gomara M."/>
            <person name="Maes P."/>
            <person name="Patton J.T."/>
            <person name="Rahman M."/>
            <person name="Van Ranst M."/>
        </authorList>
    </citation>
    <scope>NUCLEOTIDE SEQUENCE [GENOMIC RNA]</scope>
</reference>
<proteinExistence type="inferred from homology"/>
<comment type="function">
    <text evidence="1">Plays a role in the inhibition of host innate immunity by inducing the degradation of key host factors required to activate interferon production such as IRF3, IRF5 or IRF7. Associates with components of cullin RING ligases (CRLs) including CUL1 or CUL3, which are essential multisubunit ubiquitination complexes, to modulate their activities.</text>
</comment>
<comment type="subunit">
    <text evidence="1">Interacts (via C-terminus) with host IRF3; this interaction leads to IRF3 degradation. Interacts with host IRF7; this interaction leads to IRF7 degradation. Interacts with host CUL1 and CUL3.</text>
</comment>
<comment type="subcellular location">
    <subcellularLocation>
        <location evidence="1">Host cytoplasm</location>
        <location evidence="1">Host cytoskeleton</location>
    </subcellularLocation>
</comment>
<comment type="domain">
    <text evidence="1">The integrity of the zinc-binding domain in NSP1 is important for degradation of host IRF3.</text>
</comment>
<comment type="domain">
    <text evidence="1">The pLxIS motif targets host IRF3 for degradation; however phosphorylation of NSP1 pLxIS motif is not required for its activity.</text>
</comment>
<comment type="similarity">
    <text evidence="1">Belongs to the rotavirus NSP1 family.</text>
</comment>
<evidence type="ECO:0000255" key="1">
    <source>
        <dbReference type="HAMAP-Rule" id="MF_04088"/>
    </source>
</evidence>
<accession>B2BRG2</accession>
<protein>
    <recommendedName>
        <fullName evidence="1">Non-structural protein 1</fullName>
        <shortName evidence="1">NSP1</shortName>
    </recommendedName>
    <alternativeName>
        <fullName evidence="1">NCVP2</fullName>
    </alternativeName>
    <alternativeName>
        <fullName evidence="1">Non-structural RNA-binding protein 53</fullName>
        <shortName evidence="1">NS53</shortName>
    </alternativeName>
</protein>
<organismHost>
    <name type="scientific">Bos taurus</name>
    <name type="common">Bovine</name>
    <dbReference type="NCBI Taxonomy" id="9913"/>
</organismHost>
<keyword id="KW-1035">Host cytoplasm</keyword>
<keyword id="KW-1037">Host cytoskeleton</keyword>
<keyword id="KW-0945">Host-virus interaction</keyword>
<keyword id="KW-1090">Inhibition of host innate immune response by virus</keyword>
<keyword id="KW-1092">Inhibition of host IRF3 by virus</keyword>
<keyword id="KW-1093">Inhibition of host IRF7 by virus</keyword>
<keyword id="KW-1113">Inhibition of host RLR pathway by virus</keyword>
<keyword id="KW-0922">Interferon antiviral system evasion</keyword>
<keyword id="KW-0479">Metal-binding</keyword>
<keyword id="KW-0694">RNA-binding</keyword>
<keyword id="KW-0899">Viral immunoevasion</keyword>
<name>NSP1_ROTW3</name>
<dbReference type="EMBL" id="EF990699">
    <property type="protein sequence ID" value="ABV66088.1"/>
    <property type="molecule type" value="Genomic_RNA"/>
</dbReference>
<dbReference type="Proteomes" id="UP000007181">
    <property type="component" value="Genome"/>
</dbReference>
<dbReference type="GO" id="GO:0030430">
    <property type="term" value="C:host cell cytoplasm"/>
    <property type="evidence" value="ECO:0007669"/>
    <property type="project" value="UniProtKB-UniRule"/>
</dbReference>
<dbReference type="GO" id="GO:0044163">
    <property type="term" value="C:host cytoskeleton"/>
    <property type="evidence" value="ECO:0007669"/>
    <property type="project" value="UniProtKB-SubCell"/>
</dbReference>
<dbReference type="GO" id="GO:0046872">
    <property type="term" value="F:metal ion binding"/>
    <property type="evidence" value="ECO:0007669"/>
    <property type="project" value="UniProtKB-UniRule"/>
</dbReference>
<dbReference type="GO" id="GO:0003723">
    <property type="term" value="F:RNA binding"/>
    <property type="evidence" value="ECO:0007669"/>
    <property type="project" value="UniProtKB-UniRule"/>
</dbReference>
<dbReference type="GO" id="GO:0039548">
    <property type="term" value="P:symbiont-mediated suppression of host cytoplasmic pattern recognition receptor signaling pathway via inhibition of IRF3 activity"/>
    <property type="evidence" value="ECO:0007669"/>
    <property type="project" value="UniProtKB-UniRule"/>
</dbReference>
<dbReference type="GO" id="GO:0039557">
    <property type="term" value="P:symbiont-mediated suppression of host cytoplasmic pattern recognition receptor signaling pathway via inhibition of IRF7 activity"/>
    <property type="evidence" value="ECO:0007669"/>
    <property type="project" value="UniProtKB-UniRule"/>
</dbReference>
<dbReference type="HAMAP" id="MF_04088">
    <property type="entry name" value="ROTA_NSP1"/>
    <property type="match status" value="1"/>
</dbReference>
<dbReference type="InterPro" id="IPR002148">
    <property type="entry name" value="Rotavirus_NSP1"/>
</dbReference>
<dbReference type="Pfam" id="PF00981">
    <property type="entry name" value="Rota_NS53"/>
    <property type="match status" value="1"/>
</dbReference>
<feature type="chain" id="PRO_0000369080" description="Non-structural protein 1">
    <location>
        <begin position="1"/>
        <end position="491"/>
    </location>
</feature>
<feature type="region of interest" description="RNA-binding" evidence="1">
    <location>
        <begin position="1"/>
        <end position="81"/>
    </location>
</feature>
<feature type="region of interest" description="Zinc-binding domain" evidence="1">
    <location>
        <begin position="42"/>
        <end position="79"/>
    </location>
</feature>
<feature type="region of interest" description="Important for cytoskeleton localization" evidence="1">
    <location>
        <begin position="82"/>
        <end position="176"/>
    </location>
</feature>
<feature type="region of interest" description="Interaction with host IRF3" evidence="1">
    <location>
        <begin position="320"/>
        <end position="491"/>
    </location>
</feature>
<feature type="short sequence motif" description="pLxIS motif" evidence="1">
    <location>
        <begin position="485"/>
        <end position="488"/>
    </location>
</feature>
<organism>
    <name type="scientific">Rotavirus A (strain RVA/Cow/United States/WC3/1981/G6P7[5])</name>
    <name type="common">RV-A</name>
    <name type="synonym">Rotavirus (strain Wistar calf 3)</name>
    <dbReference type="NCBI Taxonomy" id="578828"/>
    <lineage>
        <taxon>Viruses</taxon>
        <taxon>Riboviria</taxon>
        <taxon>Orthornavirae</taxon>
        <taxon>Duplornaviricota</taxon>
        <taxon>Resentoviricetes</taxon>
        <taxon>Reovirales</taxon>
        <taxon>Sedoreoviridae</taxon>
        <taxon>Rotavirus</taxon>
        <taxon>Rotavirus A</taxon>
    </lineage>
</organism>